<protein>
    <recommendedName>
        <fullName evidence="2">Formamidopyrimidine-DNA glycosylase</fullName>
        <shortName evidence="2">Fapy-DNA glycosylase</shortName>
        <ecNumber evidence="2">3.2.2.23</ecNumber>
    </recommendedName>
    <alternativeName>
        <fullName evidence="2">DNA-(apurinic or apyrimidinic site) lyase MutM</fullName>
        <shortName evidence="2">AP lyase MutM</shortName>
        <ecNumber evidence="2">4.2.99.18</ecNumber>
    </alternativeName>
</protein>
<feature type="initiator methionine" description="Removed" evidence="1">
    <location>
        <position position="1"/>
    </location>
</feature>
<feature type="chain" id="PRO_1000008688" description="Formamidopyrimidine-DNA glycosylase">
    <location>
        <begin position="2"/>
        <end position="275"/>
    </location>
</feature>
<feature type="zinc finger region" description="FPG-type" evidence="2">
    <location>
        <begin position="241"/>
        <end position="275"/>
    </location>
</feature>
<feature type="active site" description="Schiff-base intermediate with DNA" evidence="2">
    <location>
        <position position="2"/>
    </location>
</feature>
<feature type="active site" description="Proton donor" evidence="2">
    <location>
        <position position="3"/>
    </location>
</feature>
<feature type="active site" description="Proton donor; for beta-elimination activity" evidence="2">
    <location>
        <position position="58"/>
    </location>
</feature>
<feature type="active site" description="Proton donor; for delta-elimination activity" evidence="2">
    <location>
        <position position="265"/>
    </location>
</feature>
<feature type="binding site" evidence="2">
    <location>
        <position position="93"/>
    </location>
    <ligand>
        <name>DNA</name>
        <dbReference type="ChEBI" id="CHEBI:16991"/>
    </ligand>
</feature>
<feature type="binding site" evidence="2">
    <location>
        <position position="111"/>
    </location>
    <ligand>
        <name>DNA</name>
        <dbReference type="ChEBI" id="CHEBI:16991"/>
    </ligand>
</feature>
<feature type="binding site" evidence="2">
    <location>
        <position position="156"/>
    </location>
    <ligand>
        <name>DNA</name>
        <dbReference type="ChEBI" id="CHEBI:16991"/>
    </ligand>
</feature>
<sequence length="275" mass="30389">MPELPEVEVTRRGIAPFVAGRRVERVDVRTAMLRWPVPADLAEQLRAREVLAVERRGKYLLFEVDAGWFIVHLGMTGTLRVLPVAGVPVAAKHDHIDWIFDEFVLRFRDPRRFGAVLWHPREAGDVHAHPLLASLGVEPFSPAFTGALLHARTRGRTVSVKQALLAGDMVVGVGNIYASESLFRAGIRPTTAAGKVSLPRYERLADAVRATLADAIERGGSTLRDFVGSNGESGYFQLDCFAYDRAGLPCRVCGTPIRQIVQGQRSTYFCPTCQR</sequence>
<accession>A4JHZ1</accession>
<gene>
    <name evidence="2" type="primary">mutM</name>
    <name evidence="2" type="synonym">fpg</name>
    <name type="ordered locus">Bcep1808_2903</name>
</gene>
<dbReference type="EC" id="3.2.2.23" evidence="2"/>
<dbReference type="EC" id="4.2.99.18" evidence="2"/>
<dbReference type="EMBL" id="CP000614">
    <property type="protein sequence ID" value="ABO55894.1"/>
    <property type="molecule type" value="Genomic_DNA"/>
</dbReference>
<dbReference type="SMR" id="A4JHZ1"/>
<dbReference type="KEGG" id="bvi:Bcep1808_2903"/>
<dbReference type="eggNOG" id="COG0266">
    <property type="taxonomic scope" value="Bacteria"/>
</dbReference>
<dbReference type="HOGENOM" id="CLU_038423_1_1_4"/>
<dbReference type="Proteomes" id="UP000002287">
    <property type="component" value="Chromosome 1"/>
</dbReference>
<dbReference type="GO" id="GO:0034039">
    <property type="term" value="F:8-oxo-7,8-dihydroguanine DNA N-glycosylase activity"/>
    <property type="evidence" value="ECO:0007669"/>
    <property type="project" value="TreeGrafter"/>
</dbReference>
<dbReference type="GO" id="GO:0140078">
    <property type="term" value="F:class I DNA-(apurinic or apyrimidinic site) endonuclease activity"/>
    <property type="evidence" value="ECO:0007669"/>
    <property type="project" value="UniProtKB-EC"/>
</dbReference>
<dbReference type="GO" id="GO:0003684">
    <property type="term" value="F:damaged DNA binding"/>
    <property type="evidence" value="ECO:0007669"/>
    <property type="project" value="InterPro"/>
</dbReference>
<dbReference type="GO" id="GO:0008270">
    <property type="term" value="F:zinc ion binding"/>
    <property type="evidence" value="ECO:0007669"/>
    <property type="project" value="UniProtKB-UniRule"/>
</dbReference>
<dbReference type="GO" id="GO:0006284">
    <property type="term" value="P:base-excision repair"/>
    <property type="evidence" value="ECO:0007669"/>
    <property type="project" value="InterPro"/>
</dbReference>
<dbReference type="CDD" id="cd08966">
    <property type="entry name" value="EcFpg-like_N"/>
    <property type="match status" value="1"/>
</dbReference>
<dbReference type="FunFam" id="1.10.8.50:FF:000003">
    <property type="entry name" value="Formamidopyrimidine-DNA glycosylase"/>
    <property type="match status" value="1"/>
</dbReference>
<dbReference type="Gene3D" id="1.10.8.50">
    <property type="match status" value="1"/>
</dbReference>
<dbReference type="Gene3D" id="3.20.190.10">
    <property type="entry name" value="MutM-like, N-terminal"/>
    <property type="match status" value="1"/>
</dbReference>
<dbReference type="HAMAP" id="MF_00103">
    <property type="entry name" value="Fapy_DNA_glycosyl"/>
    <property type="match status" value="1"/>
</dbReference>
<dbReference type="InterPro" id="IPR015886">
    <property type="entry name" value="DNA_glyclase/AP_lyase_DNA-bd"/>
</dbReference>
<dbReference type="InterPro" id="IPR015887">
    <property type="entry name" value="DNA_glyclase_Znf_dom_DNA_BS"/>
</dbReference>
<dbReference type="InterPro" id="IPR020629">
    <property type="entry name" value="Formamido-pyr_DNA_Glyclase"/>
</dbReference>
<dbReference type="InterPro" id="IPR012319">
    <property type="entry name" value="FPG_cat"/>
</dbReference>
<dbReference type="InterPro" id="IPR035937">
    <property type="entry name" value="MutM-like_N-ter"/>
</dbReference>
<dbReference type="InterPro" id="IPR010979">
    <property type="entry name" value="Ribosomal_uS13-like_H2TH"/>
</dbReference>
<dbReference type="InterPro" id="IPR000214">
    <property type="entry name" value="Znf_DNA_glyclase/AP_lyase"/>
</dbReference>
<dbReference type="InterPro" id="IPR010663">
    <property type="entry name" value="Znf_FPG/IleRS"/>
</dbReference>
<dbReference type="NCBIfam" id="TIGR00577">
    <property type="entry name" value="fpg"/>
    <property type="match status" value="1"/>
</dbReference>
<dbReference type="NCBIfam" id="NF002211">
    <property type="entry name" value="PRK01103.1"/>
    <property type="match status" value="1"/>
</dbReference>
<dbReference type="PANTHER" id="PTHR22993">
    <property type="entry name" value="FORMAMIDOPYRIMIDINE-DNA GLYCOSYLASE"/>
    <property type="match status" value="1"/>
</dbReference>
<dbReference type="PANTHER" id="PTHR22993:SF9">
    <property type="entry name" value="FORMAMIDOPYRIMIDINE-DNA GLYCOSYLASE"/>
    <property type="match status" value="1"/>
</dbReference>
<dbReference type="Pfam" id="PF01149">
    <property type="entry name" value="Fapy_DNA_glyco"/>
    <property type="match status" value="1"/>
</dbReference>
<dbReference type="Pfam" id="PF06831">
    <property type="entry name" value="H2TH"/>
    <property type="match status" value="1"/>
</dbReference>
<dbReference type="Pfam" id="PF06827">
    <property type="entry name" value="zf-FPG_IleRS"/>
    <property type="match status" value="1"/>
</dbReference>
<dbReference type="SMART" id="SM00898">
    <property type="entry name" value="Fapy_DNA_glyco"/>
    <property type="match status" value="1"/>
</dbReference>
<dbReference type="SMART" id="SM01232">
    <property type="entry name" value="H2TH"/>
    <property type="match status" value="1"/>
</dbReference>
<dbReference type="SUPFAM" id="SSF57716">
    <property type="entry name" value="Glucocorticoid receptor-like (DNA-binding domain)"/>
    <property type="match status" value="1"/>
</dbReference>
<dbReference type="SUPFAM" id="SSF81624">
    <property type="entry name" value="N-terminal domain of MutM-like DNA repair proteins"/>
    <property type="match status" value="1"/>
</dbReference>
<dbReference type="SUPFAM" id="SSF46946">
    <property type="entry name" value="S13-like H2TH domain"/>
    <property type="match status" value="1"/>
</dbReference>
<dbReference type="PROSITE" id="PS51068">
    <property type="entry name" value="FPG_CAT"/>
    <property type="match status" value="1"/>
</dbReference>
<dbReference type="PROSITE" id="PS01242">
    <property type="entry name" value="ZF_FPG_1"/>
    <property type="match status" value="1"/>
</dbReference>
<dbReference type="PROSITE" id="PS51066">
    <property type="entry name" value="ZF_FPG_2"/>
    <property type="match status" value="1"/>
</dbReference>
<proteinExistence type="inferred from homology"/>
<evidence type="ECO:0000250" key="1"/>
<evidence type="ECO:0000255" key="2">
    <source>
        <dbReference type="HAMAP-Rule" id="MF_00103"/>
    </source>
</evidence>
<keyword id="KW-0227">DNA damage</keyword>
<keyword id="KW-0234">DNA repair</keyword>
<keyword id="KW-0238">DNA-binding</keyword>
<keyword id="KW-0326">Glycosidase</keyword>
<keyword id="KW-0378">Hydrolase</keyword>
<keyword id="KW-0456">Lyase</keyword>
<keyword id="KW-0479">Metal-binding</keyword>
<keyword id="KW-0511">Multifunctional enzyme</keyword>
<keyword id="KW-0862">Zinc</keyword>
<keyword id="KW-0863">Zinc-finger</keyword>
<comment type="function">
    <text evidence="2">Involved in base excision repair of DNA damaged by oxidation or by mutagenic agents. Acts as a DNA glycosylase that recognizes and removes damaged bases. Has a preference for oxidized purines, such as 7,8-dihydro-8-oxoguanine (8-oxoG). Has AP (apurinic/apyrimidinic) lyase activity and introduces nicks in the DNA strand. Cleaves the DNA backbone by beta-delta elimination to generate a single-strand break at the site of the removed base with both 3'- and 5'-phosphates.</text>
</comment>
<comment type="catalytic activity">
    <reaction evidence="2">
        <text>Hydrolysis of DNA containing ring-opened 7-methylguanine residues, releasing 2,6-diamino-4-hydroxy-5-(N-methyl)formamidopyrimidine.</text>
        <dbReference type="EC" id="3.2.2.23"/>
    </reaction>
</comment>
<comment type="catalytic activity">
    <reaction evidence="2">
        <text>2'-deoxyribonucleotide-(2'-deoxyribose 5'-phosphate)-2'-deoxyribonucleotide-DNA = a 3'-end 2'-deoxyribonucleotide-(2,3-dehydro-2,3-deoxyribose 5'-phosphate)-DNA + a 5'-end 5'-phospho-2'-deoxyribonucleoside-DNA + H(+)</text>
        <dbReference type="Rhea" id="RHEA:66592"/>
        <dbReference type="Rhea" id="RHEA-COMP:13180"/>
        <dbReference type="Rhea" id="RHEA-COMP:16897"/>
        <dbReference type="Rhea" id="RHEA-COMP:17067"/>
        <dbReference type="ChEBI" id="CHEBI:15378"/>
        <dbReference type="ChEBI" id="CHEBI:136412"/>
        <dbReference type="ChEBI" id="CHEBI:157695"/>
        <dbReference type="ChEBI" id="CHEBI:167181"/>
        <dbReference type="EC" id="4.2.99.18"/>
    </reaction>
</comment>
<comment type="cofactor">
    <cofactor evidence="2">
        <name>Zn(2+)</name>
        <dbReference type="ChEBI" id="CHEBI:29105"/>
    </cofactor>
    <text evidence="2">Binds 1 zinc ion per subunit.</text>
</comment>
<comment type="subunit">
    <text evidence="2">Monomer.</text>
</comment>
<comment type="similarity">
    <text evidence="2">Belongs to the FPG family.</text>
</comment>
<organism>
    <name type="scientific">Burkholderia vietnamiensis (strain G4 / LMG 22486)</name>
    <name type="common">Burkholderia cepacia (strain R1808)</name>
    <dbReference type="NCBI Taxonomy" id="269482"/>
    <lineage>
        <taxon>Bacteria</taxon>
        <taxon>Pseudomonadati</taxon>
        <taxon>Pseudomonadota</taxon>
        <taxon>Betaproteobacteria</taxon>
        <taxon>Burkholderiales</taxon>
        <taxon>Burkholderiaceae</taxon>
        <taxon>Burkholderia</taxon>
        <taxon>Burkholderia cepacia complex</taxon>
    </lineage>
</organism>
<reference key="1">
    <citation type="submission" date="2007-03" db="EMBL/GenBank/DDBJ databases">
        <title>Complete sequence of chromosome 1 of Burkholderia vietnamiensis G4.</title>
        <authorList>
            <consortium name="US DOE Joint Genome Institute"/>
            <person name="Copeland A."/>
            <person name="Lucas S."/>
            <person name="Lapidus A."/>
            <person name="Barry K."/>
            <person name="Detter J.C."/>
            <person name="Glavina del Rio T."/>
            <person name="Hammon N."/>
            <person name="Israni S."/>
            <person name="Dalin E."/>
            <person name="Tice H."/>
            <person name="Pitluck S."/>
            <person name="Chain P."/>
            <person name="Malfatti S."/>
            <person name="Shin M."/>
            <person name="Vergez L."/>
            <person name="Schmutz J."/>
            <person name="Larimer F."/>
            <person name="Land M."/>
            <person name="Hauser L."/>
            <person name="Kyrpides N."/>
            <person name="Tiedje J."/>
            <person name="Richardson P."/>
        </authorList>
    </citation>
    <scope>NUCLEOTIDE SEQUENCE [LARGE SCALE GENOMIC DNA]</scope>
    <source>
        <strain>G4 / LMG 22486</strain>
    </source>
</reference>
<name>FPG_BURVG</name>